<keyword id="KW-0520">NAD</keyword>
<keyword id="KW-0521">NADP</keyword>
<keyword id="KW-0560">Oxidoreductase</keyword>
<keyword id="KW-0662">Pyridine nucleotide biosynthesis</keyword>
<keyword id="KW-1185">Reference proteome</keyword>
<reference key="1">
    <citation type="journal article" date="2004" name="J. Bacteriol.">
        <title>Complete genome sequence of the genetically tractable hydrogenotrophic methanogen Methanococcus maripaludis.</title>
        <authorList>
            <person name="Hendrickson E.L."/>
            <person name="Kaul R."/>
            <person name="Zhou Y."/>
            <person name="Bovee D."/>
            <person name="Chapman P."/>
            <person name="Chung J."/>
            <person name="Conway de Macario E."/>
            <person name="Dodsworth J.A."/>
            <person name="Gillett W."/>
            <person name="Graham D.E."/>
            <person name="Hackett M."/>
            <person name="Haydock A.K."/>
            <person name="Kang A."/>
            <person name="Land M.L."/>
            <person name="Levy R."/>
            <person name="Lie T.J."/>
            <person name="Major T.A."/>
            <person name="Moore B.C."/>
            <person name="Porat I."/>
            <person name="Palmeiri A."/>
            <person name="Rouse G."/>
            <person name="Saenphimmachak C."/>
            <person name="Soell D."/>
            <person name="Van Dien S."/>
            <person name="Wang T."/>
            <person name="Whitman W.B."/>
            <person name="Xia Q."/>
            <person name="Zhang Y."/>
            <person name="Larimer F.W."/>
            <person name="Olson M.V."/>
            <person name="Leigh J.A."/>
        </authorList>
    </citation>
    <scope>NUCLEOTIDE SEQUENCE [LARGE SCALE GENOMIC DNA]</scope>
    <source>
        <strain>DSM 14266 / JCM 13030 / NBRC 101832 / S2 / LL</strain>
    </source>
</reference>
<sequence>MLKIGLVGCGAIASLITKALMSDRLNKAEVLAFYDGNLEKAEKLAMETGADFCKSLDELVSKDLDLIVECASVNAVEDTVIKSLNNDKDVIIMSVGAFADKDLFVKLYKLAEKLGKKIYVPSGAVAGIDAVKSGSLGKISEVSLTTTKPVHGLKSALEEQGLNTDEIKEPKIVFEGTVFDAISKFPQNINVSVVLSLASRYPAKVKIIADPNAVVNRHEILVKGSIGTIKTCVENNPCRDNPKTSALAAYSVIRLIKDLSEPVRIGT</sequence>
<organism>
    <name type="scientific">Methanococcus maripaludis (strain DSM 14266 / JCM 13030 / NBRC 101832 / S2 / LL)</name>
    <dbReference type="NCBI Taxonomy" id="267377"/>
    <lineage>
        <taxon>Archaea</taxon>
        <taxon>Methanobacteriati</taxon>
        <taxon>Methanobacteriota</taxon>
        <taxon>Methanomada group</taxon>
        <taxon>Methanococci</taxon>
        <taxon>Methanococcales</taxon>
        <taxon>Methanococcaceae</taxon>
        <taxon>Methanococcus</taxon>
    </lineage>
</organism>
<feature type="chain" id="PRO_0000144899" description="L-aspartate dehydrogenase">
    <location>
        <begin position="1"/>
        <end position="267"/>
    </location>
</feature>
<feature type="active site" evidence="1">
    <location>
        <position position="218"/>
    </location>
</feature>
<feature type="binding site" evidence="1">
    <location>
        <position position="124"/>
    </location>
    <ligand>
        <name>NAD(+)</name>
        <dbReference type="ChEBI" id="CHEBI:57540"/>
    </ligand>
</feature>
<feature type="binding site" evidence="1">
    <location>
        <position position="190"/>
    </location>
    <ligand>
        <name>NAD(+)</name>
        <dbReference type="ChEBI" id="CHEBI:57540"/>
    </ligand>
</feature>
<proteinExistence type="inferred from homology"/>
<accession>Q6LZ92</accession>
<dbReference type="EC" id="1.4.1.21" evidence="1"/>
<dbReference type="EMBL" id="BX950229">
    <property type="protein sequence ID" value="CAF30293.1"/>
    <property type="molecule type" value="Genomic_DNA"/>
</dbReference>
<dbReference type="RefSeq" id="WP_011170681.1">
    <property type="nucleotide sequence ID" value="NC_005791.1"/>
</dbReference>
<dbReference type="SMR" id="Q6LZ92"/>
<dbReference type="STRING" id="267377.MMP0737"/>
<dbReference type="EnsemblBacteria" id="CAF30293">
    <property type="protein sequence ID" value="CAF30293"/>
    <property type="gene ID" value="MMP0737"/>
</dbReference>
<dbReference type="GeneID" id="10981940"/>
<dbReference type="KEGG" id="mmp:MMP0737"/>
<dbReference type="PATRIC" id="fig|267377.15.peg.755"/>
<dbReference type="eggNOG" id="arCOG00254">
    <property type="taxonomic scope" value="Archaea"/>
</dbReference>
<dbReference type="HOGENOM" id="CLU_089550_0_0_2"/>
<dbReference type="OrthoDB" id="15415at2157"/>
<dbReference type="UniPathway" id="UPA00253">
    <property type="reaction ID" value="UER00456"/>
</dbReference>
<dbReference type="Proteomes" id="UP000000590">
    <property type="component" value="Chromosome"/>
</dbReference>
<dbReference type="GO" id="GO:0033735">
    <property type="term" value="F:aspartate dehydrogenase activity"/>
    <property type="evidence" value="ECO:0007669"/>
    <property type="project" value="UniProtKB-EC"/>
</dbReference>
<dbReference type="GO" id="GO:0051287">
    <property type="term" value="F:NAD binding"/>
    <property type="evidence" value="ECO:0007669"/>
    <property type="project" value="UniProtKB-UniRule"/>
</dbReference>
<dbReference type="GO" id="GO:0050661">
    <property type="term" value="F:NADP binding"/>
    <property type="evidence" value="ECO:0007669"/>
    <property type="project" value="UniProtKB-UniRule"/>
</dbReference>
<dbReference type="GO" id="GO:0016639">
    <property type="term" value="F:oxidoreductase activity, acting on the CH-NH2 group of donors, NAD or NADP as acceptor"/>
    <property type="evidence" value="ECO:0007669"/>
    <property type="project" value="UniProtKB-UniRule"/>
</dbReference>
<dbReference type="GO" id="GO:0009435">
    <property type="term" value="P:NAD biosynthetic process"/>
    <property type="evidence" value="ECO:0007669"/>
    <property type="project" value="UniProtKB-UniRule"/>
</dbReference>
<dbReference type="Gene3D" id="3.30.360.10">
    <property type="entry name" value="Dihydrodipicolinate Reductase, domain 2"/>
    <property type="match status" value="1"/>
</dbReference>
<dbReference type="Gene3D" id="3.40.50.720">
    <property type="entry name" value="NAD(P)-binding Rossmann-like Domain"/>
    <property type="match status" value="1"/>
</dbReference>
<dbReference type="HAMAP" id="MF_01265">
    <property type="entry name" value="NadX"/>
    <property type="match status" value="1"/>
</dbReference>
<dbReference type="InterPro" id="IPR005106">
    <property type="entry name" value="Asp/hSer_DH_NAD-bd"/>
</dbReference>
<dbReference type="InterPro" id="IPR002811">
    <property type="entry name" value="Asp_DH"/>
</dbReference>
<dbReference type="InterPro" id="IPR022487">
    <property type="entry name" value="Asp_DH_arc"/>
</dbReference>
<dbReference type="InterPro" id="IPR020626">
    <property type="entry name" value="Asp_DH_prok"/>
</dbReference>
<dbReference type="InterPro" id="IPR011182">
    <property type="entry name" value="L-Asp_DH"/>
</dbReference>
<dbReference type="InterPro" id="IPR036291">
    <property type="entry name" value="NAD(P)-bd_dom_sf"/>
</dbReference>
<dbReference type="NCBIfam" id="TIGR03855">
    <property type="entry name" value="NAD_NadX"/>
    <property type="match status" value="1"/>
</dbReference>
<dbReference type="NCBIfam" id="NF009828">
    <property type="entry name" value="PRK13303.1-3"/>
    <property type="match status" value="1"/>
</dbReference>
<dbReference type="NCBIfam" id="NF009830">
    <property type="entry name" value="PRK13304.1"/>
    <property type="match status" value="1"/>
</dbReference>
<dbReference type="PANTHER" id="PTHR31873:SF6">
    <property type="entry name" value="ASPARTATE DEHYDROGENASE DOMAIN-CONTAINING PROTEIN"/>
    <property type="match status" value="1"/>
</dbReference>
<dbReference type="PANTHER" id="PTHR31873">
    <property type="entry name" value="L-ASPARTATE DEHYDROGENASE-RELATED"/>
    <property type="match status" value="1"/>
</dbReference>
<dbReference type="Pfam" id="PF01958">
    <property type="entry name" value="Asp_DH_C"/>
    <property type="match status" value="1"/>
</dbReference>
<dbReference type="Pfam" id="PF03447">
    <property type="entry name" value="NAD_binding_3"/>
    <property type="match status" value="1"/>
</dbReference>
<dbReference type="PIRSF" id="PIRSF005227">
    <property type="entry name" value="Asp_dh_NAD_syn"/>
    <property type="match status" value="1"/>
</dbReference>
<dbReference type="SUPFAM" id="SSF55347">
    <property type="entry name" value="Glyceraldehyde-3-phosphate dehydrogenase-like, C-terminal domain"/>
    <property type="match status" value="1"/>
</dbReference>
<dbReference type="SUPFAM" id="SSF51735">
    <property type="entry name" value="NAD(P)-binding Rossmann-fold domains"/>
    <property type="match status" value="1"/>
</dbReference>
<name>ASPD_METMP</name>
<gene>
    <name evidence="1" type="primary">nadX</name>
    <name type="ordered locus">MMP0737</name>
</gene>
<evidence type="ECO:0000255" key="1">
    <source>
        <dbReference type="HAMAP-Rule" id="MF_01265"/>
    </source>
</evidence>
<protein>
    <recommendedName>
        <fullName evidence="1">L-aspartate dehydrogenase</fullName>
        <ecNumber evidence="1">1.4.1.21</ecNumber>
    </recommendedName>
</protein>
<comment type="function">
    <text evidence="1">Specifically catalyzes the NAD or NADP-dependent dehydrogenation of L-aspartate to iminoaspartate.</text>
</comment>
<comment type="catalytic activity">
    <reaction evidence="1">
        <text>L-aspartate + NADP(+) + H2O = oxaloacetate + NH4(+) + NADPH + H(+)</text>
        <dbReference type="Rhea" id="RHEA:11784"/>
        <dbReference type="ChEBI" id="CHEBI:15377"/>
        <dbReference type="ChEBI" id="CHEBI:15378"/>
        <dbReference type="ChEBI" id="CHEBI:16452"/>
        <dbReference type="ChEBI" id="CHEBI:28938"/>
        <dbReference type="ChEBI" id="CHEBI:29991"/>
        <dbReference type="ChEBI" id="CHEBI:57783"/>
        <dbReference type="ChEBI" id="CHEBI:58349"/>
        <dbReference type="EC" id="1.4.1.21"/>
    </reaction>
</comment>
<comment type="catalytic activity">
    <reaction evidence="1">
        <text>L-aspartate + NAD(+) + H2O = oxaloacetate + NH4(+) + NADH + H(+)</text>
        <dbReference type="Rhea" id="RHEA:11788"/>
        <dbReference type="ChEBI" id="CHEBI:15377"/>
        <dbReference type="ChEBI" id="CHEBI:15378"/>
        <dbReference type="ChEBI" id="CHEBI:16452"/>
        <dbReference type="ChEBI" id="CHEBI:28938"/>
        <dbReference type="ChEBI" id="CHEBI:29991"/>
        <dbReference type="ChEBI" id="CHEBI:57540"/>
        <dbReference type="ChEBI" id="CHEBI:57945"/>
        <dbReference type="EC" id="1.4.1.21"/>
    </reaction>
</comment>
<comment type="pathway">
    <text evidence="1">Cofactor biosynthesis; NAD(+) biosynthesis; iminoaspartate from L-aspartate (dehydrogenase route): step 1/1.</text>
</comment>
<comment type="miscellaneous">
    <text evidence="1">The iminoaspartate product is unstable in aqueous solution and can decompose to oxaloacetate and ammonia.</text>
</comment>
<comment type="similarity">
    <text evidence="1">Belongs to the L-aspartate dehydrogenase family.</text>
</comment>